<dbReference type="EC" id="7.1.1.-" evidence="1"/>
<dbReference type="EMBL" id="CP000868">
    <property type="protein sequence ID" value="ABX14721.1"/>
    <property type="molecule type" value="Genomic_DNA"/>
</dbReference>
<dbReference type="EMBL" id="AP009385">
    <property type="protein sequence ID" value="BAG44129.1"/>
    <property type="molecule type" value="Genomic_DNA"/>
</dbReference>
<dbReference type="RefSeq" id="WP_006398800.1">
    <property type="nucleotide sequence ID" value="NC_010804.1"/>
</dbReference>
<dbReference type="SMR" id="A9AFY9"/>
<dbReference type="STRING" id="395019.BMULJ_02233"/>
<dbReference type="KEGG" id="bmj:BMULJ_02233"/>
<dbReference type="KEGG" id="bmu:Bmul_1030"/>
<dbReference type="eggNOG" id="COG0852">
    <property type="taxonomic scope" value="Bacteria"/>
</dbReference>
<dbReference type="HOGENOM" id="CLU_042628_2_1_4"/>
<dbReference type="Proteomes" id="UP000008815">
    <property type="component" value="Chromosome 1"/>
</dbReference>
<dbReference type="GO" id="GO:0005886">
    <property type="term" value="C:plasma membrane"/>
    <property type="evidence" value="ECO:0007669"/>
    <property type="project" value="UniProtKB-SubCell"/>
</dbReference>
<dbReference type="GO" id="GO:0008137">
    <property type="term" value="F:NADH dehydrogenase (ubiquinone) activity"/>
    <property type="evidence" value="ECO:0007669"/>
    <property type="project" value="InterPro"/>
</dbReference>
<dbReference type="GO" id="GO:0050136">
    <property type="term" value="F:NADH:ubiquinone reductase (non-electrogenic) activity"/>
    <property type="evidence" value="ECO:0007669"/>
    <property type="project" value="UniProtKB-UniRule"/>
</dbReference>
<dbReference type="GO" id="GO:0048038">
    <property type="term" value="F:quinone binding"/>
    <property type="evidence" value="ECO:0007669"/>
    <property type="project" value="UniProtKB-KW"/>
</dbReference>
<dbReference type="Gene3D" id="3.30.460.80">
    <property type="entry name" value="NADH:ubiquinone oxidoreductase, 30kDa subunit"/>
    <property type="match status" value="1"/>
</dbReference>
<dbReference type="HAMAP" id="MF_01357">
    <property type="entry name" value="NDH1_NuoC"/>
    <property type="match status" value="1"/>
</dbReference>
<dbReference type="InterPro" id="IPR010218">
    <property type="entry name" value="NADH_DH_suC"/>
</dbReference>
<dbReference type="InterPro" id="IPR037232">
    <property type="entry name" value="NADH_quin_OxRdtase_su_C/D-like"/>
</dbReference>
<dbReference type="InterPro" id="IPR001268">
    <property type="entry name" value="NADH_UbQ_OxRdtase_30kDa_su"/>
</dbReference>
<dbReference type="InterPro" id="IPR020396">
    <property type="entry name" value="NADH_UbQ_OxRdtase_CS"/>
</dbReference>
<dbReference type="NCBIfam" id="TIGR01961">
    <property type="entry name" value="NuoC_fam"/>
    <property type="match status" value="1"/>
</dbReference>
<dbReference type="NCBIfam" id="NF004730">
    <property type="entry name" value="PRK06074.1-1"/>
    <property type="match status" value="1"/>
</dbReference>
<dbReference type="PANTHER" id="PTHR10884:SF14">
    <property type="entry name" value="NADH DEHYDROGENASE [UBIQUINONE] IRON-SULFUR PROTEIN 3, MITOCHONDRIAL"/>
    <property type="match status" value="1"/>
</dbReference>
<dbReference type="PANTHER" id="PTHR10884">
    <property type="entry name" value="NADH DEHYDROGENASE UBIQUINONE IRON-SULFUR PROTEIN 3"/>
    <property type="match status" value="1"/>
</dbReference>
<dbReference type="Pfam" id="PF00329">
    <property type="entry name" value="Complex1_30kDa"/>
    <property type="match status" value="1"/>
</dbReference>
<dbReference type="SUPFAM" id="SSF143243">
    <property type="entry name" value="Nqo5-like"/>
    <property type="match status" value="1"/>
</dbReference>
<dbReference type="PROSITE" id="PS00542">
    <property type="entry name" value="COMPLEX1_30K"/>
    <property type="match status" value="1"/>
</dbReference>
<sequence>MASKIETLKANLEAALGARVVSLTEAIGELTLVVKASDYLDVATTLRDDPKLRFEQLIDLCGVDYQTYGDGAYDGPRFAAVTHLLSVTNNWRLRLRVFAPDDDLPIVPSLVDIWNSANWYEREAFDLYGIVFEGHPDLRRILTDYGFIGHPFRKDFPVSGYVEMRYDPEEKRVVYQPVTIEPREITPRVIREDRYGGLKH</sequence>
<keyword id="KW-0997">Cell inner membrane</keyword>
<keyword id="KW-1003">Cell membrane</keyword>
<keyword id="KW-0472">Membrane</keyword>
<keyword id="KW-0520">NAD</keyword>
<keyword id="KW-0874">Quinone</keyword>
<keyword id="KW-1185">Reference proteome</keyword>
<keyword id="KW-1278">Translocase</keyword>
<keyword id="KW-0813">Transport</keyword>
<keyword id="KW-0830">Ubiquinone</keyword>
<proteinExistence type="inferred from homology"/>
<evidence type="ECO:0000255" key="1">
    <source>
        <dbReference type="HAMAP-Rule" id="MF_01357"/>
    </source>
</evidence>
<comment type="function">
    <text evidence="1">NDH-1 shuttles electrons from NADH, via FMN and iron-sulfur (Fe-S) centers, to quinones in the respiratory chain. The immediate electron acceptor for the enzyme in this species is believed to be ubiquinone. Couples the redox reaction to proton translocation (for every two electrons transferred, four hydrogen ions are translocated across the cytoplasmic membrane), and thus conserves the redox energy in a proton gradient.</text>
</comment>
<comment type="catalytic activity">
    <reaction evidence="1">
        <text>a quinone + NADH + 5 H(+)(in) = a quinol + NAD(+) + 4 H(+)(out)</text>
        <dbReference type="Rhea" id="RHEA:57888"/>
        <dbReference type="ChEBI" id="CHEBI:15378"/>
        <dbReference type="ChEBI" id="CHEBI:24646"/>
        <dbReference type="ChEBI" id="CHEBI:57540"/>
        <dbReference type="ChEBI" id="CHEBI:57945"/>
        <dbReference type="ChEBI" id="CHEBI:132124"/>
    </reaction>
</comment>
<comment type="subunit">
    <text evidence="1">NDH-1 is composed of 14 different subunits. Subunits NuoB, C, D, E, F, and G constitute the peripheral sector of the complex.</text>
</comment>
<comment type="subcellular location">
    <subcellularLocation>
        <location evidence="1">Cell inner membrane</location>
        <topology evidence="1">Peripheral membrane protein</topology>
        <orientation evidence="1">Cytoplasmic side</orientation>
    </subcellularLocation>
</comment>
<comment type="similarity">
    <text evidence="1">Belongs to the complex I 30 kDa subunit family.</text>
</comment>
<accession>A9AFY9</accession>
<reference key="1">
    <citation type="submission" date="2007-10" db="EMBL/GenBank/DDBJ databases">
        <title>Complete sequence of chromosome 1 of Burkholderia multivorans ATCC 17616.</title>
        <authorList>
            <person name="Copeland A."/>
            <person name="Lucas S."/>
            <person name="Lapidus A."/>
            <person name="Barry K."/>
            <person name="Glavina del Rio T."/>
            <person name="Dalin E."/>
            <person name="Tice H."/>
            <person name="Pitluck S."/>
            <person name="Chain P."/>
            <person name="Malfatti S."/>
            <person name="Shin M."/>
            <person name="Vergez L."/>
            <person name="Schmutz J."/>
            <person name="Larimer F."/>
            <person name="Land M."/>
            <person name="Hauser L."/>
            <person name="Kyrpides N."/>
            <person name="Kim E."/>
            <person name="Tiedje J."/>
            <person name="Richardson P."/>
        </authorList>
    </citation>
    <scope>NUCLEOTIDE SEQUENCE [LARGE SCALE GENOMIC DNA]</scope>
    <source>
        <strain>ATCC 17616 / 249</strain>
    </source>
</reference>
<reference key="2">
    <citation type="submission" date="2007-04" db="EMBL/GenBank/DDBJ databases">
        <title>Complete genome sequence of Burkholderia multivorans ATCC 17616.</title>
        <authorList>
            <person name="Ohtsubo Y."/>
            <person name="Yamashita A."/>
            <person name="Kurokawa K."/>
            <person name="Takami H."/>
            <person name="Yuhara S."/>
            <person name="Nishiyama E."/>
            <person name="Endo R."/>
            <person name="Miyazaki R."/>
            <person name="Ono A."/>
            <person name="Yano K."/>
            <person name="Ito M."/>
            <person name="Sota M."/>
            <person name="Yuji N."/>
            <person name="Hattori M."/>
            <person name="Tsuda M."/>
        </authorList>
    </citation>
    <scope>NUCLEOTIDE SEQUENCE [LARGE SCALE GENOMIC DNA]</scope>
    <source>
        <strain>ATCC 17616 / 249</strain>
    </source>
</reference>
<name>NUOC_BURM1</name>
<feature type="chain" id="PRO_0000358068" description="NADH-quinone oxidoreductase subunit C">
    <location>
        <begin position="1"/>
        <end position="200"/>
    </location>
</feature>
<organism>
    <name type="scientific">Burkholderia multivorans (strain ATCC 17616 / 249)</name>
    <dbReference type="NCBI Taxonomy" id="395019"/>
    <lineage>
        <taxon>Bacteria</taxon>
        <taxon>Pseudomonadati</taxon>
        <taxon>Pseudomonadota</taxon>
        <taxon>Betaproteobacteria</taxon>
        <taxon>Burkholderiales</taxon>
        <taxon>Burkholderiaceae</taxon>
        <taxon>Burkholderia</taxon>
        <taxon>Burkholderia cepacia complex</taxon>
    </lineage>
</organism>
<protein>
    <recommendedName>
        <fullName evidence="1">NADH-quinone oxidoreductase subunit C</fullName>
        <ecNumber evidence="1">7.1.1.-</ecNumber>
    </recommendedName>
    <alternativeName>
        <fullName evidence="1">NADH dehydrogenase I subunit C</fullName>
    </alternativeName>
    <alternativeName>
        <fullName evidence="1">NDH-1 subunit C</fullName>
    </alternativeName>
</protein>
<gene>
    <name evidence="1" type="primary">nuoC</name>
    <name type="ordered locus">Bmul_1030</name>
    <name type="ordered locus">BMULJ_02233</name>
</gene>